<gene>
    <name type="ordered locus">MPN_205</name>
    <name type="ORF">GT9_orf438V</name>
    <name type="ORF">MP626</name>
</gene>
<protein>
    <recommendedName>
        <fullName>Uncharacterized protein MPN_205</fullName>
    </recommendedName>
</protein>
<dbReference type="EMBL" id="U00089">
    <property type="protein sequence ID" value="AAB96274.1"/>
    <property type="molecule type" value="Genomic_DNA"/>
</dbReference>
<dbReference type="PIR" id="S73952">
    <property type="entry name" value="S73952"/>
</dbReference>
<dbReference type="RefSeq" id="NP_109893.1">
    <property type="nucleotide sequence ID" value="NC_000912.1"/>
</dbReference>
<dbReference type="SMR" id="P75571"/>
<dbReference type="EnsemblBacteria" id="AAB96274">
    <property type="protein sequence ID" value="AAB96274"/>
    <property type="gene ID" value="MPN_205"/>
</dbReference>
<dbReference type="KEGG" id="mpn:MPN_205"/>
<dbReference type="PATRIC" id="fig|272634.6.peg.225"/>
<dbReference type="HOGENOM" id="CLU_053128_0_0_14"/>
<dbReference type="BioCyc" id="MPNE272634:G1GJ3-333-MONOMER"/>
<dbReference type="Proteomes" id="UP000000808">
    <property type="component" value="Chromosome"/>
</dbReference>
<dbReference type="InterPro" id="IPR022116">
    <property type="entry name" value="P1_N"/>
</dbReference>
<dbReference type="Pfam" id="PF12378">
    <property type="entry name" value="P1_N"/>
    <property type="match status" value="1"/>
</dbReference>
<organism>
    <name type="scientific">Mycoplasma pneumoniae (strain ATCC 29342 / M129 / Subtype 1)</name>
    <name type="common">Mycoplasmoides pneumoniae</name>
    <dbReference type="NCBI Taxonomy" id="272634"/>
    <lineage>
        <taxon>Bacteria</taxon>
        <taxon>Bacillati</taxon>
        <taxon>Mycoplasmatota</taxon>
        <taxon>Mycoplasmoidales</taxon>
        <taxon>Mycoplasmoidaceae</taxon>
        <taxon>Mycoplasmoides</taxon>
    </lineage>
</organism>
<feature type="chain" id="PRO_0000210655" description="Uncharacterized protein MPN_205">
    <location>
        <begin position="1"/>
        <end position="438"/>
    </location>
</feature>
<feature type="region of interest" description="Disordered" evidence="1">
    <location>
        <begin position="1"/>
        <end position="22"/>
    </location>
</feature>
<feature type="region of interest" description="Disordered" evidence="1">
    <location>
        <begin position="156"/>
        <end position="264"/>
    </location>
</feature>
<feature type="compositionally biased region" description="Basic and acidic residues" evidence="1">
    <location>
        <begin position="156"/>
        <end position="170"/>
    </location>
</feature>
<feature type="compositionally biased region" description="Low complexity" evidence="1">
    <location>
        <begin position="171"/>
        <end position="189"/>
    </location>
</feature>
<feature type="compositionally biased region" description="Basic and acidic residues" evidence="1">
    <location>
        <begin position="191"/>
        <end position="206"/>
    </location>
</feature>
<keyword id="KW-1185">Reference proteome</keyword>
<evidence type="ECO:0000256" key="1">
    <source>
        <dbReference type="SAM" id="MobiDB-lite"/>
    </source>
</evidence>
<evidence type="ECO:0000305" key="2"/>
<comment type="similarity">
    <text evidence="2">Belongs to the adhesin P1 family.</text>
</comment>
<name>Y205_MYCPN</name>
<proteinExistence type="inferred from homology"/>
<accession>P75571</accession>
<sequence>MRDNTAKGITAGSGSQQTTYDPARTEATLTTTTFALRRYDLAGRALYDLDFSKLNPQTPTRDANCQITFNPFGGFGLSGSAPQQWNEVKNKVPVEVAQDPTDPYRFAVLLVPRSVVYYEQLQRGLALPNQGSSSGSGQQNTTIGAYGLKVKNAEADTAKSNEKLQGDESKSSNGSSSTSTTTQRGSTNSDTKVKALKIEVKKKSDSEDNGQLQLEKNDLANAPIKRGEESGQSVQLKADDFGTAPSSSGSGGNSNPGSPTPWRPWLATEQIHKDLPKWSASILILYDAPYARNRTAIDRVDHLDPKVMTANYPPSWRMPKWNHHGLWDWKARDVLFQTTGFDESNTSNTKQGFQKEADSDKSAPIALPFEAYFANIGNLTWFGQALLVFGGNGHVTKSAHTAPLSIWLYIYLVKAVTFRLLLANSLLSKSNIYKKTAN</sequence>
<reference key="1">
    <citation type="journal article" date="1996" name="Nucleic Acids Res.">
        <title>Complete sequence analysis of the genome of the bacterium Mycoplasma pneumoniae.</title>
        <authorList>
            <person name="Himmelreich R."/>
            <person name="Hilbert H."/>
            <person name="Plagens H."/>
            <person name="Pirkl E."/>
            <person name="Li B.-C."/>
            <person name="Herrmann R."/>
        </authorList>
    </citation>
    <scope>NUCLEOTIDE SEQUENCE [LARGE SCALE GENOMIC DNA]</scope>
    <source>
        <strain>ATCC 29342 / M129 / Subtype 1</strain>
    </source>
</reference>